<organism>
    <name type="scientific">Staphylococcus aureus (strain Mu3 / ATCC 700698)</name>
    <dbReference type="NCBI Taxonomy" id="418127"/>
    <lineage>
        <taxon>Bacteria</taxon>
        <taxon>Bacillati</taxon>
        <taxon>Bacillota</taxon>
        <taxon>Bacilli</taxon>
        <taxon>Bacillales</taxon>
        <taxon>Staphylococcaceae</taxon>
        <taxon>Staphylococcus</taxon>
    </lineage>
</organism>
<reference key="1">
    <citation type="journal article" date="2008" name="Antimicrob. Agents Chemother.">
        <title>Mutated response regulator graR is responsible for phenotypic conversion of Staphylococcus aureus from heterogeneous vancomycin-intermediate resistance to vancomycin-intermediate resistance.</title>
        <authorList>
            <person name="Neoh H.-M."/>
            <person name="Cui L."/>
            <person name="Yuzawa H."/>
            <person name="Takeuchi F."/>
            <person name="Matsuo M."/>
            <person name="Hiramatsu K."/>
        </authorList>
    </citation>
    <scope>NUCLEOTIDE SEQUENCE [LARGE SCALE GENOMIC DNA]</scope>
    <source>
        <strain>Mu3 / ATCC 700698</strain>
    </source>
</reference>
<sequence length="430" mass="47235">MFVDQVKISLKAGDGGNGITAYRREKYVPFGGPAGGDGGKGASVVFEVDEGLRTLLDFRYQRHFKASKGENGQSSNMHGKNAEDLVLKVPPGTIIKNVETDEVLADLVEDGQRAVVAKGGRGGRGNSRFATPRNPAPDFSEKGEPGEELDVSLELKLLADVGLVGFPSVGKSTLLSIVSKAKPKIGAYHFTTIKPNLGVVSTPDQRSFVMADLPGLIEGASDGVGLGHQFLRHVERTKVIVHMIDMSGSEGREPIEDYKVINQELAAYEQRLEDRPQIVVANKMDLPESQDNLNLFKEEIGEDVPVIPVSTITRDNIDQLLYAIADKLEEYKDVDFTVEEEESVGINRVLYKHTPSQDKFTISRDDDGAYVVSGNAIERMFKMTDFNSDPAVRRFARQMRSMGIDDALRERGCKNGDIVRILGGEFEFVE</sequence>
<comment type="function">
    <text evidence="1">An essential GTPase which binds GTP, GDP and possibly (p)ppGpp with moderate affinity, with high nucleotide exchange rates and a fairly low GTP hydrolysis rate. Plays a role in control of the cell cycle, stress response, ribosome biogenesis and in those bacteria that undergo differentiation, in morphogenesis control.</text>
</comment>
<comment type="cofactor">
    <cofactor evidence="1">
        <name>Mg(2+)</name>
        <dbReference type="ChEBI" id="CHEBI:18420"/>
    </cofactor>
</comment>
<comment type="subunit">
    <text evidence="1">Monomer.</text>
</comment>
<comment type="subcellular location">
    <subcellularLocation>
        <location evidence="1">Cytoplasm</location>
    </subcellularLocation>
</comment>
<comment type="similarity">
    <text evidence="1">Belongs to the TRAFAC class OBG-HflX-like GTPase superfamily. OBG GTPase family.</text>
</comment>
<gene>
    <name evidence="1" type="primary">obg</name>
    <name type="ordered locus">SAHV_1631</name>
</gene>
<evidence type="ECO:0000255" key="1">
    <source>
        <dbReference type="HAMAP-Rule" id="MF_01454"/>
    </source>
</evidence>
<evidence type="ECO:0000255" key="2">
    <source>
        <dbReference type="PROSITE-ProRule" id="PRU01229"/>
    </source>
</evidence>
<evidence type="ECO:0000255" key="3">
    <source>
        <dbReference type="PROSITE-ProRule" id="PRU01231"/>
    </source>
</evidence>
<evidence type="ECO:0000256" key="4">
    <source>
        <dbReference type="SAM" id="MobiDB-lite"/>
    </source>
</evidence>
<keyword id="KW-0963">Cytoplasm</keyword>
<keyword id="KW-0342">GTP-binding</keyword>
<keyword id="KW-0378">Hydrolase</keyword>
<keyword id="KW-0460">Magnesium</keyword>
<keyword id="KW-0479">Metal-binding</keyword>
<keyword id="KW-0547">Nucleotide-binding</keyword>
<feature type="chain" id="PRO_0000386274" description="GTPase Obg">
    <location>
        <begin position="1"/>
        <end position="430"/>
    </location>
</feature>
<feature type="domain" description="Obg" evidence="3">
    <location>
        <begin position="1"/>
        <end position="158"/>
    </location>
</feature>
<feature type="domain" description="OBG-type G" evidence="1">
    <location>
        <begin position="159"/>
        <end position="329"/>
    </location>
</feature>
<feature type="domain" description="OCT" evidence="2">
    <location>
        <begin position="352"/>
        <end position="430"/>
    </location>
</feature>
<feature type="region of interest" description="Disordered" evidence="4">
    <location>
        <begin position="118"/>
        <end position="145"/>
    </location>
</feature>
<feature type="binding site" evidence="1">
    <location>
        <begin position="165"/>
        <end position="172"/>
    </location>
    <ligand>
        <name>GTP</name>
        <dbReference type="ChEBI" id="CHEBI:37565"/>
    </ligand>
</feature>
<feature type="binding site" evidence="1">
    <location>
        <position position="172"/>
    </location>
    <ligand>
        <name>Mg(2+)</name>
        <dbReference type="ChEBI" id="CHEBI:18420"/>
    </ligand>
</feature>
<feature type="binding site" evidence="1">
    <location>
        <begin position="190"/>
        <end position="194"/>
    </location>
    <ligand>
        <name>GTP</name>
        <dbReference type="ChEBI" id="CHEBI:37565"/>
    </ligand>
</feature>
<feature type="binding site" evidence="1">
    <location>
        <position position="192"/>
    </location>
    <ligand>
        <name>Mg(2+)</name>
        <dbReference type="ChEBI" id="CHEBI:18420"/>
    </ligand>
</feature>
<feature type="binding site" evidence="1">
    <location>
        <begin position="212"/>
        <end position="215"/>
    </location>
    <ligand>
        <name>GTP</name>
        <dbReference type="ChEBI" id="CHEBI:37565"/>
    </ligand>
</feature>
<feature type="binding site" evidence="1">
    <location>
        <begin position="282"/>
        <end position="285"/>
    </location>
    <ligand>
        <name>GTP</name>
        <dbReference type="ChEBI" id="CHEBI:37565"/>
    </ligand>
</feature>
<feature type="binding site" evidence="1">
    <location>
        <begin position="310"/>
        <end position="312"/>
    </location>
    <ligand>
        <name>GTP</name>
        <dbReference type="ChEBI" id="CHEBI:37565"/>
    </ligand>
</feature>
<proteinExistence type="inferred from homology"/>
<dbReference type="EC" id="3.6.5.-" evidence="1"/>
<dbReference type="EMBL" id="AP009324">
    <property type="protein sequence ID" value="BAF78514.1"/>
    <property type="molecule type" value="Genomic_DNA"/>
</dbReference>
<dbReference type="SMR" id="A7X361"/>
<dbReference type="KEGG" id="saw:SAHV_1631"/>
<dbReference type="HOGENOM" id="CLU_011747_2_1_9"/>
<dbReference type="GO" id="GO:0005737">
    <property type="term" value="C:cytoplasm"/>
    <property type="evidence" value="ECO:0007669"/>
    <property type="project" value="UniProtKB-SubCell"/>
</dbReference>
<dbReference type="GO" id="GO:0005525">
    <property type="term" value="F:GTP binding"/>
    <property type="evidence" value="ECO:0007669"/>
    <property type="project" value="UniProtKB-UniRule"/>
</dbReference>
<dbReference type="GO" id="GO:0003924">
    <property type="term" value="F:GTPase activity"/>
    <property type="evidence" value="ECO:0007669"/>
    <property type="project" value="UniProtKB-UniRule"/>
</dbReference>
<dbReference type="GO" id="GO:0000287">
    <property type="term" value="F:magnesium ion binding"/>
    <property type="evidence" value="ECO:0007669"/>
    <property type="project" value="InterPro"/>
</dbReference>
<dbReference type="GO" id="GO:0042254">
    <property type="term" value="P:ribosome biogenesis"/>
    <property type="evidence" value="ECO:0007669"/>
    <property type="project" value="UniProtKB-UniRule"/>
</dbReference>
<dbReference type="CDD" id="cd01898">
    <property type="entry name" value="Obg"/>
    <property type="match status" value="1"/>
</dbReference>
<dbReference type="FunFam" id="2.70.210.12:FF:000001">
    <property type="entry name" value="GTPase Obg"/>
    <property type="match status" value="1"/>
</dbReference>
<dbReference type="FunFam" id="3.40.50.300:FF:000515">
    <property type="entry name" value="GTPase Obg"/>
    <property type="match status" value="1"/>
</dbReference>
<dbReference type="Gene3D" id="3.30.300.350">
    <property type="entry name" value="GTP-binding protein OBG, C-terminal domain"/>
    <property type="match status" value="1"/>
</dbReference>
<dbReference type="Gene3D" id="2.70.210.12">
    <property type="entry name" value="GTP1/OBG domain"/>
    <property type="match status" value="1"/>
</dbReference>
<dbReference type="Gene3D" id="3.40.50.300">
    <property type="entry name" value="P-loop containing nucleotide triphosphate hydrolases"/>
    <property type="match status" value="1"/>
</dbReference>
<dbReference type="HAMAP" id="MF_01454">
    <property type="entry name" value="GTPase_Obg"/>
    <property type="match status" value="1"/>
</dbReference>
<dbReference type="InterPro" id="IPR031167">
    <property type="entry name" value="G_OBG"/>
</dbReference>
<dbReference type="InterPro" id="IPR006073">
    <property type="entry name" value="GTP-bd"/>
</dbReference>
<dbReference type="InterPro" id="IPR014100">
    <property type="entry name" value="GTP-bd_Obg/CgtA"/>
</dbReference>
<dbReference type="InterPro" id="IPR036346">
    <property type="entry name" value="GTP-bd_prot_GTP1/OBG_C_sf"/>
</dbReference>
<dbReference type="InterPro" id="IPR006074">
    <property type="entry name" value="GTP1-OBG_CS"/>
</dbReference>
<dbReference type="InterPro" id="IPR006169">
    <property type="entry name" value="GTP1_OBG_dom"/>
</dbReference>
<dbReference type="InterPro" id="IPR036726">
    <property type="entry name" value="GTP1_OBG_dom_sf"/>
</dbReference>
<dbReference type="InterPro" id="IPR045086">
    <property type="entry name" value="OBG_GTPase"/>
</dbReference>
<dbReference type="InterPro" id="IPR015349">
    <property type="entry name" value="OCT_dom"/>
</dbReference>
<dbReference type="InterPro" id="IPR027417">
    <property type="entry name" value="P-loop_NTPase"/>
</dbReference>
<dbReference type="NCBIfam" id="TIGR02729">
    <property type="entry name" value="Obg_CgtA"/>
    <property type="match status" value="1"/>
</dbReference>
<dbReference type="NCBIfam" id="TIGR03595">
    <property type="entry name" value="Obg_CgtA_exten"/>
    <property type="match status" value="1"/>
</dbReference>
<dbReference type="NCBIfam" id="NF008954">
    <property type="entry name" value="PRK12296.1"/>
    <property type="match status" value="1"/>
</dbReference>
<dbReference type="NCBIfam" id="NF008955">
    <property type="entry name" value="PRK12297.1"/>
    <property type="match status" value="1"/>
</dbReference>
<dbReference type="NCBIfam" id="NF008956">
    <property type="entry name" value="PRK12299.1"/>
    <property type="match status" value="1"/>
</dbReference>
<dbReference type="PANTHER" id="PTHR11702">
    <property type="entry name" value="DEVELOPMENTALLY REGULATED GTP-BINDING PROTEIN-RELATED"/>
    <property type="match status" value="1"/>
</dbReference>
<dbReference type="PANTHER" id="PTHR11702:SF31">
    <property type="entry name" value="MITOCHONDRIAL RIBOSOME-ASSOCIATED GTPASE 2"/>
    <property type="match status" value="1"/>
</dbReference>
<dbReference type="Pfam" id="PF09269">
    <property type="entry name" value="DUF1967"/>
    <property type="match status" value="1"/>
</dbReference>
<dbReference type="Pfam" id="PF01018">
    <property type="entry name" value="GTP1_OBG"/>
    <property type="match status" value="1"/>
</dbReference>
<dbReference type="Pfam" id="PF01926">
    <property type="entry name" value="MMR_HSR1"/>
    <property type="match status" value="1"/>
</dbReference>
<dbReference type="PIRSF" id="PIRSF002401">
    <property type="entry name" value="GTP_bd_Obg/CgtA"/>
    <property type="match status" value="1"/>
</dbReference>
<dbReference type="PRINTS" id="PR00326">
    <property type="entry name" value="GTP1OBG"/>
</dbReference>
<dbReference type="SUPFAM" id="SSF102741">
    <property type="entry name" value="Obg GTP-binding protein C-terminal domain"/>
    <property type="match status" value="1"/>
</dbReference>
<dbReference type="SUPFAM" id="SSF82051">
    <property type="entry name" value="Obg GTP-binding protein N-terminal domain"/>
    <property type="match status" value="1"/>
</dbReference>
<dbReference type="SUPFAM" id="SSF52540">
    <property type="entry name" value="P-loop containing nucleoside triphosphate hydrolases"/>
    <property type="match status" value="1"/>
</dbReference>
<dbReference type="PROSITE" id="PS51710">
    <property type="entry name" value="G_OBG"/>
    <property type="match status" value="1"/>
</dbReference>
<dbReference type="PROSITE" id="PS00905">
    <property type="entry name" value="GTP1_OBG"/>
    <property type="match status" value="1"/>
</dbReference>
<dbReference type="PROSITE" id="PS51883">
    <property type="entry name" value="OBG"/>
    <property type="match status" value="1"/>
</dbReference>
<dbReference type="PROSITE" id="PS51881">
    <property type="entry name" value="OCT"/>
    <property type="match status" value="1"/>
</dbReference>
<name>OBG_STAA1</name>
<protein>
    <recommendedName>
        <fullName evidence="1">GTPase Obg</fullName>
        <ecNumber evidence="1">3.6.5.-</ecNumber>
    </recommendedName>
    <alternativeName>
        <fullName evidence="1">GTP-binding protein Obg</fullName>
    </alternativeName>
</protein>
<accession>A7X361</accession>